<evidence type="ECO:0000250" key="1"/>
<evidence type="ECO:0000255" key="2">
    <source>
        <dbReference type="HAMAP-Rule" id="MF_01109"/>
    </source>
</evidence>
<accession>Q1JFZ1</accession>
<keyword id="KW-0056">Arginine metabolism</keyword>
<keyword id="KW-0963">Cytoplasm</keyword>
<keyword id="KW-0808">Transferase</keyword>
<organism>
    <name type="scientific">Streptococcus pyogenes serotype M2 (strain MGAS10270)</name>
    <dbReference type="NCBI Taxonomy" id="370552"/>
    <lineage>
        <taxon>Bacteria</taxon>
        <taxon>Bacillati</taxon>
        <taxon>Bacillota</taxon>
        <taxon>Bacilli</taxon>
        <taxon>Lactobacillales</taxon>
        <taxon>Streptococcaceae</taxon>
        <taxon>Streptococcus</taxon>
    </lineage>
</organism>
<proteinExistence type="inferred from homology"/>
<gene>
    <name evidence="2" type="primary">arcB</name>
    <name type="ordered locus">MGAS10270_Spy1288</name>
</gene>
<dbReference type="EC" id="2.1.3.3" evidence="2"/>
<dbReference type="EMBL" id="CP000260">
    <property type="protein sequence ID" value="ABF34353.1"/>
    <property type="molecule type" value="Genomic_DNA"/>
</dbReference>
<dbReference type="SMR" id="Q1JFZ1"/>
<dbReference type="KEGG" id="sph:MGAS10270_Spy1288"/>
<dbReference type="HOGENOM" id="CLU_043846_3_1_9"/>
<dbReference type="UniPathway" id="UPA00254">
    <property type="reaction ID" value="UER00365"/>
</dbReference>
<dbReference type="Proteomes" id="UP000002436">
    <property type="component" value="Chromosome"/>
</dbReference>
<dbReference type="GO" id="GO:0005737">
    <property type="term" value="C:cytoplasm"/>
    <property type="evidence" value="ECO:0007669"/>
    <property type="project" value="UniProtKB-SubCell"/>
</dbReference>
<dbReference type="GO" id="GO:0016597">
    <property type="term" value="F:amino acid binding"/>
    <property type="evidence" value="ECO:0007669"/>
    <property type="project" value="InterPro"/>
</dbReference>
<dbReference type="GO" id="GO:0004585">
    <property type="term" value="F:ornithine carbamoyltransferase activity"/>
    <property type="evidence" value="ECO:0007669"/>
    <property type="project" value="UniProtKB-UniRule"/>
</dbReference>
<dbReference type="GO" id="GO:0042450">
    <property type="term" value="P:arginine biosynthetic process via ornithine"/>
    <property type="evidence" value="ECO:0007669"/>
    <property type="project" value="TreeGrafter"/>
</dbReference>
<dbReference type="GO" id="GO:0019547">
    <property type="term" value="P:arginine catabolic process to ornithine"/>
    <property type="evidence" value="ECO:0007669"/>
    <property type="project" value="UniProtKB-UniRule"/>
</dbReference>
<dbReference type="GO" id="GO:0019240">
    <property type="term" value="P:citrulline biosynthetic process"/>
    <property type="evidence" value="ECO:0007669"/>
    <property type="project" value="TreeGrafter"/>
</dbReference>
<dbReference type="FunFam" id="3.40.50.1370:FF:000004">
    <property type="entry name" value="Ornithine carbamoyltransferase"/>
    <property type="match status" value="1"/>
</dbReference>
<dbReference type="Gene3D" id="3.40.50.1370">
    <property type="entry name" value="Aspartate/ornithine carbamoyltransferase"/>
    <property type="match status" value="2"/>
</dbReference>
<dbReference type="HAMAP" id="MF_01109">
    <property type="entry name" value="OTCase"/>
    <property type="match status" value="1"/>
</dbReference>
<dbReference type="InterPro" id="IPR006132">
    <property type="entry name" value="Asp/Orn_carbamoyltranf_P-bd"/>
</dbReference>
<dbReference type="InterPro" id="IPR006130">
    <property type="entry name" value="Asp/Orn_carbamoylTrfase"/>
</dbReference>
<dbReference type="InterPro" id="IPR036901">
    <property type="entry name" value="Asp/Orn_carbamoylTrfase_sf"/>
</dbReference>
<dbReference type="InterPro" id="IPR006131">
    <property type="entry name" value="Asp_carbamoyltransf_Asp/Orn-bd"/>
</dbReference>
<dbReference type="InterPro" id="IPR002292">
    <property type="entry name" value="Orn/put_carbamltrans"/>
</dbReference>
<dbReference type="InterPro" id="IPR024904">
    <property type="entry name" value="OTCase_ArgI"/>
</dbReference>
<dbReference type="NCBIfam" id="TIGR00658">
    <property type="entry name" value="orni_carb_tr"/>
    <property type="match status" value="1"/>
</dbReference>
<dbReference type="NCBIfam" id="NF001986">
    <property type="entry name" value="PRK00779.1"/>
    <property type="match status" value="1"/>
</dbReference>
<dbReference type="PANTHER" id="PTHR45753:SF1">
    <property type="entry name" value="ORNITHINE CARBAMOYLTRANSFERASE, CATABOLIC"/>
    <property type="match status" value="1"/>
</dbReference>
<dbReference type="PANTHER" id="PTHR45753">
    <property type="entry name" value="ORNITHINE CARBAMOYLTRANSFERASE, MITOCHONDRIAL"/>
    <property type="match status" value="1"/>
</dbReference>
<dbReference type="Pfam" id="PF00185">
    <property type="entry name" value="OTCace"/>
    <property type="match status" value="1"/>
</dbReference>
<dbReference type="Pfam" id="PF02729">
    <property type="entry name" value="OTCace_N"/>
    <property type="match status" value="1"/>
</dbReference>
<dbReference type="PRINTS" id="PR00100">
    <property type="entry name" value="AOTCASE"/>
</dbReference>
<dbReference type="PRINTS" id="PR00102">
    <property type="entry name" value="OTCASE"/>
</dbReference>
<dbReference type="SUPFAM" id="SSF53671">
    <property type="entry name" value="Aspartate/ornithine carbamoyltransferase"/>
    <property type="match status" value="1"/>
</dbReference>
<dbReference type="PROSITE" id="PS00097">
    <property type="entry name" value="CARBAMOYLTRANSFERASE"/>
    <property type="match status" value="1"/>
</dbReference>
<feature type="chain" id="PRO_1000065125" description="Ornithine carbamoyltransferase">
    <location>
        <begin position="1"/>
        <end position="337"/>
    </location>
</feature>
<feature type="binding site" evidence="2">
    <location>
        <begin position="57"/>
        <end position="60"/>
    </location>
    <ligand>
        <name>carbamoyl phosphate</name>
        <dbReference type="ChEBI" id="CHEBI:58228"/>
    </ligand>
</feature>
<feature type="binding site" evidence="2">
    <location>
        <position position="84"/>
    </location>
    <ligand>
        <name>carbamoyl phosphate</name>
        <dbReference type="ChEBI" id="CHEBI:58228"/>
    </ligand>
</feature>
<feature type="binding site" evidence="2">
    <location>
        <position position="108"/>
    </location>
    <ligand>
        <name>carbamoyl phosphate</name>
        <dbReference type="ChEBI" id="CHEBI:58228"/>
    </ligand>
</feature>
<feature type="binding site" evidence="2">
    <location>
        <begin position="135"/>
        <end position="138"/>
    </location>
    <ligand>
        <name>carbamoyl phosphate</name>
        <dbReference type="ChEBI" id="CHEBI:58228"/>
    </ligand>
</feature>
<feature type="binding site" evidence="2">
    <location>
        <position position="167"/>
    </location>
    <ligand>
        <name>L-ornithine</name>
        <dbReference type="ChEBI" id="CHEBI:46911"/>
    </ligand>
</feature>
<feature type="binding site" evidence="2">
    <location>
        <position position="231"/>
    </location>
    <ligand>
        <name>L-ornithine</name>
        <dbReference type="ChEBI" id="CHEBI:46911"/>
    </ligand>
</feature>
<feature type="binding site" evidence="2">
    <location>
        <begin position="235"/>
        <end position="236"/>
    </location>
    <ligand>
        <name>L-ornithine</name>
        <dbReference type="ChEBI" id="CHEBI:46911"/>
    </ligand>
</feature>
<feature type="binding site" evidence="2">
    <location>
        <begin position="272"/>
        <end position="273"/>
    </location>
    <ligand>
        <name>carbamoyl phosphate</name>
        <dbReference type="ChEBI" id="CHEBI:58228"/>
    </ligand>
</feature>
<feature type="binding site" evidence="2">
    <location>
        <position position="317"/>
    </location>
    <ligand>
        <name>carbamoyl phosphate</name>
        <dbReference type="ChEBI" id="CHEBI:58228"/>
    </ligand>
</feature>
<protein>
    <recommendedName>
        <fullName evidence="2">Ornithine carbamoyltransferase</fullName>
        <shortName evidence="2">OTCase</shortName>
        <ecNumber evidence="2">2.1.3.3</ecNumber>
    </recommendedName>
</protein>
<name>OTC_STRPD</name>
<comment type="function">
    <text evidence="1">Reversibly catalyzes the transfer of the carbamoyl group from carbamoyl phosphate (CP) to the N(epsilon) atom of ornithine (ORN) to produce L-citrulline.</text>
</comment>
<comment type="catalytic activity">
    <reaction evidence="2">
        <text>carbamoyl phosphate + L-ornithine = L-citrulline + phosphate + H(+)</text>
        <dbReference type="Rhea" id="RHEA:19513"/>
        <dbReference type="ChEBI" id="CHEBI:15378"/>
        <dbReference type="ChEBI" id="CHEBI:43474"/>
        <dbReference type="ChEBI" id="CHEBI:46911"/>
        <dbReference type="ChEBI" id="CHEBI:57743"/>
        <dbReference type="ChEBI" id="CHEBI:58228"/>
        <dbReference type="EC" id="2.1.3.3"/>
    </reaction>
</comment>
<comment type="pathway">
    <text evidence="2">Amino-acid degradation; L-arginine degradation via ADI pathway; carbamoyl phosphate from L-arginine: step 2/2.</text>
</comment>
<comment type="subcellular location">
    <subcellularLocation>
        <location evidence="2">Cytoplasm</location>
    </subcellularLocation>
</comment>
<comment type="similarity">
    <text evidence="2">Belongs to the aspartate/ornithine carbamoyltransferase superfamily. OTCase family.</text>
</comment>
<sequence length="337" mass="37897">MTQVFQGRSFLAEKDFTRAELEYLIDFSAHLKDLKKRGVPHHYLEGKNIALLFEKTSTRTRAAFTTAAIDLGAHPEYLGANDIQLGKKESTEDTAKVLGRMFDGIEFRGFSQRMVEELAEFSGVPVWNGLTDEWHPTQMLADYLTVKENFGKLEGLTLVYCGDGRNNVANSLLVTGAILGVNVHIFSPKELFPEEEIVTLAEGYAKESGARILITEDADEAVKGADVLYTDVWVSMGEEDKFKERVELLQPYQVNMDLVQKAGNDKLIFLHCLPAFHDTNTVYGKDVAEKFGVKEMEVTDEVFRSKYARHFDQAENRMHTIKAVMAATLGNLFIPKV</sequence>
<reference key="1">
    <citation type="journal article" date="2006" name="Proc. Natl. Acad. Sci. U.S.A.">
        <title>Molecular genetic anatomy of inter- and intraserotype variation in the human bacterial pathogen group A Streptococcus.</title>
        <authorList>
            <person name="Beres S.B."/>
            <person name="Richter E.W."/>
            <person name="Nagiec M.J."/>
            <person name="Sumby P."/>
            <person name="Porcella S.F."/>
            <person name="DeLeo F.R."/>
            <person name="Musser J.M."/>
        </authorList>
    </citation>
    <scope>NUCLEOTIDE SEQUENCE [LARGE SCALE GENOMIC DNA]</scope>
    <source>
        <strain>MGAS10270</strain>
    </source>
</reference>